<protein>
    <recommendedName>
        <fullName>Beta-galactosidase</fullName>
        <ecNumber evidence="2">3.2.1.23</ecNumber>
    </recommendedName>
    <alternativeName>
        <fullName>Acid beta-galactosidase</fullName>
        <shortName>Lactase</shortName>
    </alternativeName>
</protein>
<organism>
    <name type="scientific">Pongo abelii</name>
    <name type="common">Sumatran orangutan</name>
    <name type="synonym">Pongo pygmaeus abelii</name>
    <dbReference type="NCBI Taxonomy" id="9601"/>
    <lineage>
        <taxon>Eukaryota</taxon>
        <taxon>Metazoa</taxon>
        <taxon>Chordata</taxon>
        <taxon>Craniata</taxon>
        <taxon>Vertebrata</taxon>
        <taxon>Euteleostomi</taxon>
        <taxon>Mammalia</taxon>
        <taxon>Eutheria</taxon>
        <taxon>Euarchontoglires</taxon>
        <taxon>Primates</taxon>
        <taxon>Haplorrhini</taxon>
        <taxon>Catarrhini</taxon>
        <taxon>Hominidae</taxon>
        <taxon>Pongo</taxon>
    </lineage>
</organism>
<feature type="signal peptide" evidence="1">
    <location>
        <begin position="1"/>
        <end position="23"/>
    </location>
</feature>
<feature type="propeptide" id="PRO_0000283037" evidence="1">
    <location>
        <begin position="24"/>
        <end position="28"/>
    </location>
</feature>
<feature type="chain" id="PRO_0000283038" description="Beta-galactosidase">
    <location>
        <begin position="29"/>
        <end position="677"/>
    </location>
</feature>
<feature type="region of interest" description="Disordered" evidence="4">
    <location>
        <begin position="654"/>
        <end position="677"/>
    </location>
</feature>
<feature type="compositionally biased region" description="Basic and acidic residues" evidence="4">
    <location>
        <begin position="668"/>
        <end position="677"/>
    </location>
</feature>
<feature type="active site" description="Proton donor" evidence="2">
    <location>
        <position position="188"/>
    </location>
</feature>
<feature type="active site" description="Nucleophile" evidence="2">
    <location>
        <position position="268"/>
    </location>
</feature>
<feature type="binding site" evidence="2">
    <location>
        <position position="83"/>
    </location>
    <ligand>
        <name>substrate</name>
    </ligand>
</feature>
<feature type="binding site" evidence="2">
    <location>
        <position position="129"/>
    </location>
    <ligand>
        <name>substrate</name>
    </ligand>
</feature>
<feature type="binding site" evidence="2">
    <location>
        <position position="187"/>
    </location>
    <ligand>
        <name>substrate</name>
    </ligand>
</feature>
<feature type="binding site" evidence="2">
    <location>
        <position position="333"/>
    </location>
    <ligand>
        <name>substrate</name>
    </ligand>
</feature>
<feature type="glycosylation site" description="N-linked (GlcNAc...) asparagine" evidence="3">
    <location>
        <position position="26"/>
    </location>
</feature>
<feature type="glycosylation site" description="N-linked (GlcNAc...) asparagine" evidence="3">
    <location>
        <position position="247"/>
    </location>
</feature>
<feature type="glycosylation site" description="N-linked (GlcNAc...) asparagine" evidence="3">
    <location>
        <position position="464"/>
    </location>
</feature>
<feature type="glycosylation site" description="N-linked (GlcNAc...) asparagine" evidence="3">
    <location>
        <position position="498"/>
    </location>
</feature>
<feature type="glycosylation site" description="N-linked (GlcNAc...) asparagine" evidence="3">
    <location>
        <position position="545"/>
    </location>
</feature>
<feature type="glycosylation site" description="N-linked (GlcNAc...) asparagine" evidence="3">
    <location>
        <position position="555"/>
    </location>
</feature>
<feature type="disulfide bond" evidence="2">
    <location>
        <begin position="195"/>
        <end position="230"/>
    </location>
</feature>
<feature type="disulfide bond" evidence="2">
    <location>
        <begin position="626"/>
        <end position="634"/>
    </location>
</feature>
<comment type="function">
    <text evidence="2">Cleaves beta-linked terminal galactosyl residues from gangliosides, glycoproteins, and glycosaminoglycans.</text>
</comment>
<comment type="catalytic activity">
    <reaction evidence="2">
        <text>Hydrolysis of terminal non-reducing beta-D-galactose residues in beta-D-galactosides.</text>
        <dbReference type="EC" id="3.2.1.23"/>
    </reaction>
</comment>
<comment type="subunit">
    <text evidence="2">Homodimer. May form higher multimers.</text>
</comment>
<comment type="subcellular location">
    <subcellularLocation>
        <location evidence="2">Lysosome</location>
    </subcellularLocation>
</comment>
<comment type="similarity">
    <text evidence="5">Belongs to the glycosyl hydrolase 35 family.</text>
</comment>
<name>BGAL_PONAB</name>
<proteinExistence type="evidence at transcript level"/>
<evidence type="ECO:0000250" key="1"/>
<evidence type="ECO:0000250" key="2">
    <source>
        <dbReference type="UniProtKB" id="P16278"/>
    </source>
</evidence>
<evidence type="ECO:0000255" key="3"/>
<evidence type="ECO:0000256" key="4">
    <source>
        <dbReference type="SAM" id="MobiDB-lite"/>
    </source>
</evidence>
<evidence type="ECO:0000305" key="5"/>
<dbReference type="EC" id="3.2.1.23" evidence="2"/>
<dbReference type="EMBL" id="CR860068">
    <property type="protein sequence ID" value="CAH92216.1"/>
    <property type="molecule type" value="mRNA"/>
</dbReference>
<dbReference type="RefSeq" id="NP_001126295.1">
    <property type="nucleotide sequence ID" value="NM_001132823.1"/>
</dbReference>
<dbReference type="SMR" id="Q5R7P4"/>
<dbReference type="FunCoup" id="Q5R7P4">
    <property type="interactions" value="1349"/>
</dbReference>
<dbReference type="STRING" id="9601.ENSPPYP00000015702"/>
<dbReference type="CAZy" id="GH35">
    <property type="family name" value="Glycoside Hydrolase Family 35"/>
</dbReference>
<dbReference type="GlyCosmos" id="Q5R7P4">
    <property type="glycosylation" value="6 sites, No reported glycans"/>
</dbReference>
<dbReference type="GeneID" id="100173272"/>
<dbReference type="KEGG" id="pon:100173272"/>
<dbReference type="CTD" id="2720"/>
<dbReference type="eggNOG" id="KOG0496">
    <property type="taxonomic scope" value="Eukaryota"/>
</dbReference>
<dbReference type="InParanoid" id="Q5R7P4"/>
<dbReference type="OrthoDB" id="1657402at2759"/>
<dbReference type="Proteomes" id="UP000001595">
    <property type="component" value="Unplaced"/>
</dbReference>
<dbReference type="GO" id="GO:0005764">
    <property type="term" value="C:lysosome"/>
    <property type="evidence" value="ECO:0007669"/>
    <property type="project" value="UniProtKB-SubCell"/>
</dbReference>
<dbReference type="GO" id="GO:0004565">
    <property type="term" value="F:beta-galactosidase activity"/>
    <property type="evidence" value="ECO:0000250"/>
    <property type="project" value="UniProtKB"/>
</dbReference>
<dbReference type="GO" id="GO:0005975">
    <property type="term" value="P:carbohydrate metabolic process"/>
    <property type="evidence" value="ECO:0007669"/>
    <property type="project" value="InterPro"/>
</dbReference>
<dbReference type="FunFam" id="2.60.120.260:FF:000115">
    <property type="entry name" value="Beta-galactosidase"/>
    <property type="match status" value="1"/>
</dbReference>
<dbReference type="FunFam" id="2.60.120.260:FF:000260">
    <property type="entry name" value="Beta-galactosidase"/>
    <property type="match status" value="1"/>
</dbReference>
<dbReference type="FunFam" id="3.20.20.80:FF:000017">
    <property type="entry name" value="Beta-galactosidase"/>
    <property type="match status" value="1"/>
</dbReference>
<dbReference type="Gene3D" id="2.60.120.260">
    <property type="entry name" value="Galactose-binding domain-like"/>
    <property type="match status" value="2"/>
</dbReference>
<dbReference type="Gene3D" id="3.20.20.80">
    <property type="entry name" value="Glycosidases"/>
    <property type="match status" value="1"/>
</dbReference>
<dbReference type="InterPro" id="IPR026283">
    <property type="entry name" value="B-gal_1-like"/>
</dbReference>
<dbReference type="InterPro" id="IPR048912">
    <property type="entry name" value="BetaGal1-like_ABD1"/>
</dbReference>
<dbReference type="InterPro" id="IPR048913">
    <property type="entry name" value="BetaGal_gal-bd"/>
</dbReference>
<dbReference type="InterPro" id="IPR008979">
    <property type="entry name" value="Galactose-bd-like_sf"/>
</dbReference>
<dbReference type="InterPro" id="IPR031330">
    <property type="entry name" value="Gly_Hdrlase_35_cat"/>
</dbReference>
<dbReference type="InterPro" id="IPR019801">
    <property type="entry name" value="Glyco_hydro_35_CS"/>
</dbReference>
<dbReference type="InterPro" id="IPR001944">
    <property type="entry name" value="Glycoside_Hdrlase_35"/>
</dbReference>
<dbReference type="InterPro" id="IPR017853">
    <property type="entry name" value="Glycoside_hydrolase_SF"/>
</dbReference>
<dbReference type="PANTHER" id="PTHR23421">
    <property type="entry name" value="BETA-GALACTOSIDASE RELATED"/>
    <property type="match status" value="1"/>
</dbReference>
<dbReference type="Pfam" id="PF21317">
    <property type="entry name" value="BetaGal_ABD_1"/>
    <property type="match status" value="1"/>
</dbReference>
<dbReference type="Pfam" id="PF21467">
    <property type="entry name" value="BetaGal_gal-bd"/>
    <property type="match status" value="1"/>
</dbReference>
<dbReference type="Pfam" id="PF01301">
    <property type="entry name" value="Glyco_hydro_35"/>
    <property type="match status" value="1"/>
</dbReference>
<dbReference type="PIRSF" id="PIRSF006336">
    <property type="entry name" value="B-gal"/>
    <property type="match status" value="1"/>
</dbReference>
<dbReference type="PRINTS" id="PR00742">
    <property type="entry name" value="GLHYDRLASE35"/>
</dbReference>
<dbReference type="SUPFAM" id="SSF51445">
    <property type="entry name" value="(Trans)glycosidases"/>
    <property type="match status" value="1"/>
</dbReference>
<dbReference type="SUPFAM" id="SSF49785">
    <property type="entry name" value="Galactose-binding domain-like"/>
    <property type="match status" value="1"/>
</dbReference>
<dbReference type="PROSITE" id="PS01182">
    <property type="entry name" value="GLYCOSYL_HYDROL_F35"/>
    <property type="match status" value="1"/>
</dbReference>
<reference key="1">
    <citation type="submission" date="2004-11" db="EMBL/GenBank/DDBJ databases">
        <authorList>
            <consortium name="The German cDNA consortium"/>
        </authorList>
    </citation>
    <scope>NUCLEOTIDE SEQUENCE [LARGE SCALE MRNA]</scope>
    <source>
        <tissue>Kidney</tissue>
    </source>
</reference>
<accession>Q5R7P4</accession>
<sequence length="677" mass="75932">MPGFLVRILPLLLALLLLGPTRGLRNATQRMFEIDYSRDCFLKDGQPFRYISGSIHYSRVPRFYWKDRLLKMKMAGLNAIQTYVPWNFHEPWPGQYQFSEDHDVEYFLQLAHELGLLVILRPGPYICAEWEMGGLPAWLLEKESILLRSSDPDYLAAVDKWLGVLLPKMKPLLYQNGGPVITVQVENEYGSYFACDFDYLRFLQKCFRHHLGDDVVLFTTDGAHKTFLKCGALQGLYTTVDFGTGSNITDAFLSQRKCEPKGPLINSEFYTGWLDHWGQPHSTIKTEAVASSLYDILARGASVNLYMFIGGTNFAYWNGANTPYAAQPTSYDYDAPLSEAGDLTEKYFALRNIIQKFEKVPEGPIPPSTPKFAYGKVALEKLKTVGAALDILCPSGPIKSLYPLTFIQVKQHYGFVLYRTTLPQDCSNPAPLSSPFNGVHDRAYVAVDGIPQGVLERNNVITLNITGKAGATLDLLVENMGRVNYGAYINDFKGLVSNLTLSSNILTDWTIFPLDTEDAVRSHLGGWGHRDSGHHDEAWAHSSSNYTLPAFYVGNFSIPSGIPDLPQDTFIQFPGWTKGQVWINGFNLGRYWPARGPQLTLFVPQHILMTSAPNTITMLELERAPCSNDDPELCAVTFVDRPVIGSSVTYDHPSKPVEKKLMPSPPQKNKDSWLDHV</sequence>
<keyword id="KW-1015">Disulfide bond</keyword>
<keyword id="KW-0325">Glycoprotein</keyword>
<keyword id="KW-0326">Glycosidase</keyword>
<keyword id="KW-0378">Hydrolase</keyword>
<keyword id="KW-0458">Lysosome</keyword>
<keyword id="KW-1185">Reference proteome</keyword>
<keyword id="KW-0732">Signal</keyword>
<keyword id="KW-0865">Zymogen</keyword>
<gene>
    <name type="primary">GLB1</name>
</gene>